<accession>Q8KGE0</accession>
<reference key="1">
    <citation type="journal article" date="2002" name="Proc. Natl. Acad. Sci. U.S.A.">
        <title>The complete genome sequence of Chlorobium tepidum TLS, a photosynthetic, anaerobic, green-sulfur bacterium.</title>
        <authorList>
            <person name="Eisen J.A."/>
            <person name="Nelson K.E."/>
            <person name="Paulsen I.T."/>
            <person name="Heidelberg J.F."/>
            <person name="Wu M."/>
            <person name="Dodson R.J."/>
            <person name="DeBoy R.T."/>
            <person name="Gwinn M.L."/>
            <person name="Nelson W.C."/>
            <person name="Haft D.H."/>
            <person name="Hickey E.K."/>
            <person name="Peterson J.D."/>
            <person name="Durkin A.S."/>
            <person name="Kolonay J.F."/>
            <person name="Yang F."/>
            <person name="Holt I.E."/>
            <person name="Umayam L.A."/>
            <person name="Mason T.M."/>
            <person name="Brenner M."/>
            <person name="Shea T.P."/>
            <person name="Parksey D.S."/>
            <person name="Nierman W.C."/>
            <person name="Feldblyum T.V."/>
            <person name="Hansen C.L."/>
            <person name="Craven M.B."/>
            <person name="Radune D."/>
            <person name="Vamathevan J.J."/>
            <person name="Khouri H.M."/>
            <person name="White O."/>
            <person name="Gruber T.M."/>
            <person name="Ketchum K.A."/>
            <person name="Venter J.C."/>
            <person name="Tettelin H."/>
            <person name="Bryant D.A."/>
            <person name="Fraser C.M."/>
        </authorList>
    </citation>
    <scope>NUCLEOTIDE SEQUENCE [LARGE SCALE GENOMIC DNA]</scope>
    <source>
        <strain evidence="9">ATCC 49652 / DSM 12025 / NBRC 103806 / TLS</strain>
    </source>
</reference>
<reference key="2">
    <citation type="journal article" date="2004" name="J. Bacteriol.">
        <title>The bchU gene of Chlorobium tepidum encodes the c-20 methyltransferase in bacteriochlorophyll c biosynthesis.</title>
        <authorList>
            <person name="Maresca J.A."/>
            <person name="Gomez Maqueo Chew A."/>
            <person name="Ponsati M.R."/>
            <person name="Frigaard N.U."/>
            <person name="Ormerod J.G."/>
            <person name="Bryant D.A."/>
        </authorList>
    </citation>
    <scope>FUNCTION</scope>
    <scope>CATALYTIC ACTIVITY</scope>
    <scope>DISRUPTION PHENOTYPE</scope>
    <scope>PATHWAY</scope>
    <source>
        <strain>ATCC 49652 / DSM 12025 / NBRC 103806 / TLS</strain>
    </source>
</reference>
<reference key="3">
    <citation type="journal article" date="2006" name="J. Mol. Biol.">
        <title>Crystal structures of BchU, a methyltransferase involved in bacteriochlorophyll c biosynthesis, and its complex with S-adenosylhomocysteine: implications for reaction mechanism.</title>
        <authorList>
            <person name="Wada K."/>
            <person name="Yamaguchi H."/>
            <person name="Harada J."/>
            <person name="Niimi K."/>
            <person name="Osumi S."/>
            <person name="Saga Y."/>
            <person name="Oh-Oka H."/>
            <person name="Tamiaki H."/>
            <person name="Fukuyama K."/>
        </authorList>
    </citation>
    <scope>X-RAY CRYSTALLOGRAPHY (2.27 ANGSTROMS) IN COMPLEX WITH S-ADENOSYL-L-METHIONINE AND ZINC ION</scope>
    <scope>FUNCTION</scope>
    <scope>CATALYTIC ACTIVITY</scope>
    <scope>MUTAGENESIS OF HIS-150; TYR-246 AND HIS-290</scope>
    <scope>ACTIVE SITE</scope>
    <scope>REACTION MECHANISM</scope>
    <scope>SUBUNIT</scope>
    <source>
        <strain>ATCC 49652 / DSM 12025 / NBRC 103806 / TLS</strain>
    </source>
</reference>
<organism>
    <name type="scientific">Chlorobaculum tepidum (strain ATCC 49652 / DSM 12025 / NBRC 103806 / TLS)</name>
    <name type="common">Chlorobium tepidum</name>
    <dbReference type="NCBI Taxonomy" id="194439"/>
    <lineage>
        <taxon>Bacteria</taxon>
        <taxon>Pseudomonadati</taxon>
        <taxon>Chlorobiota</taxon>
        <taxon>Chlorobiia</taxon>
        <taxon>Chlorobiales</taxon>
        <taxon>Chlorobiaceae</taxon>
        <taxon>Chlorobaculum</taxon>
    </lineage>
</organism>
<dbReference type="EC" id="2.1.1.333" evidence="6 7"/>
<dbReference type="EMBL" id="AE006470">
    <property type="protein sequence ID" value="AAM71276.1"/>
    <property type="molecule type" value="Genomic_DNA"/>
</dbReference>
<dbReference type="RefSeq" id="NP_660934.1">
    <property type="nucleotide sequence ID" value="NC_002932.3"/>
</dbReference>
<dbReference type="RefSeq" id="WP_010931722.1">
    <property type="nucleotide sequence ID" value="NC_002932.3"/>
</dbReference>
<dbReference type="PDB" id="1X19">
    <property type="method" value="X-ray"/>
    <property type="resolution" value="2.27 A"/>
    <property type="chains" value="A=1-338"/>
</dbReference>
<dbReference type="PDB" id="1X1A">
    <property type="method" value="X-ray"/>
    <property type="resolution" value="2.60 A"/>
    <property type="chains" value="A=1-338"/>
</dbReference>
<dbReference type="PDB" id="1X1B">
    <property type="method" value="X-ray"/>
    <property type="resolution" value="2.60 A"/>
    <property type="chains" value="A=1-338"/>
</dbReference>
<dbReference type="PDB" id="1X1C">
    <property type="method" value="X-ray"/>
    <property type="resolution" value="2.85 A"/>
    <property type="chains" value="A=1-338"/>
</dbReference>
<dbReference type="PDB" id="1X1D">
    <property type="method" value="X-ray"/>
    <property type="resolution" value="2.70 A"/>
    <property type="chains" value="A=1-338"/>
</dbReference>
<dbReference type="PDBsum" id="1X19"/>
<dbReference type="PDBsum" id="1X1A"/>
<dbReference type="PDBsum" id="1X1B"/>
<dbReference type="PDBsum" id="1X1C"/>
<dbReference type="PDBsum" id="1X1D"/>
<dbReference type="SMR" id="Q8KGE0"/>
<dbReference type="STRING" id="194439.CT0028"/>
<dbReference type="EnsemblBacteria" id="AAM71276">
    <property type="protein sequence ID" value="AAM71276"/>
    <property type="gene ID" value="CT0028"/>
</dbReference>
<dbReference type="KEGG" id="cte:CT0028"/>
<dbReference type="PATRIC" id="fig|194439.7.peg.27"/>
<dbReference type="eggNOG" id="COG2813">
    <property type="taxonomic scope" value="Bacteria"/>
</dbReference>
<dbReference type="HOGENOM" id="CLU_005533_4_0_10"/>
<dbReference type="OrthoDB" id="9766840at2"/>
<dbReference type="BioCyc" id="MetaCyc:MONOMER-19713"/>
<dbReference type="BRENDA" id="2.1.1.333">
    <property type="organism ID" value="1345"/>
</dbReference>
<dbReference type="UniPathway" id="UPA00671"/>
<dbReference type="EvolutionaryTrace" id="Q8KGE0"/>
<dbReference type="Proteomes" id="UP000001007">
    <property type="component" value="Chromosome"/>
</dbReference>
<dbReference type="GO" id="GO:0046872">
    <property type="term" value="F:metal ion binding"/>
    <property type="evidence" value="ECO:0007669"/>
    <property type="project" value="UniProtKB-KW"/>
</dbReference>
<dbReference type="GO" id="GO:0008168">
    <property type="term" value="F:methyltransferase activity"/>
    <property type="evidence" value="ECO:0000314"/>
    <property type="project" value="UniProtKB"/>
</dbReference>
<dbReference type="GO" id="GO:0008171">
    <property type="term" value="F:O-methyltransferase activity"/>
    <property type="evidence" value="ECO:0007669"/>
    <property type="project" value="InterPro"/>
</dbReference>
<dbReference type="GO" id="GO:0046983">
    <property type="term" value="F:protein dimerization activity"/>
    <property type="evidence" value="ECO:0007669"/>
    <property type="project" value="InterPro"/>
</dbReference>
<dbReference type="GO" id="GO:0036069">
    <property type="term" value="P:light-dependent bacteriochlorophyll biosynthetic process"/>
    <property type="evidence" value="ECO:0000314"/>
    <property type="project" value="UniProtKB"/>
</dbReference>
<dbReference type="GO" id="GO:0036070">
    <property type="term" value="P:light-independent bacteriochlorophyll biosynthetic process"/>
    <property type="evidence" value="ECO:0007669"/>
    <property type="project" value="UniProtKB-UniPathway"/>
</dbReference>
<dbReference type="GO" id="GO:0032259">
    <property type="term" value="P:methylation"/>
    <property type="evidence" value="ECO:0007669"/>
    <property type="project" value="UniProtKB-KW"/>
</dbReference>
<dbReference type="FunFam" id="1.10.10.10:FF:001152">
    <property type="entry name" value="Bacteriochlorophyllide d C-20 methyltransferase"/>
    <property type="match status" value="1"/>
</dbReference>
<dbReference type="FunFam" id="3.40.50.150:FF:000405">
    <property type="entry name" value="Carminomycin 4-O-methyltransferase DnrK"/>
    <property type="match status" value="1"/>
</dbReference>
<dbReference type="Gene3D" id="3.40.50.150">
    <property type="entry name" value="Vaccinia Virus protein VP39"/>
    <property type="match status" value="1"/>
</dbReference>
<dbReference type="Gene3D" id="1.10.10.10">
    <property type="entry name" value="Winged helix-like DNA-binding domain superfamily/Winged helix DNA-binding domain"/>
    <property type="match status" value="1"/>
</dbReference>
<dbReference type="InterPro" id="IPR014088">
    <property type="entry name" value="BchU"/>
</dbReference>
<dbReference type="InterPro" id="IPR016461">
    <property type="entry name" value="COMT-like"/>
</dbReference>
<dbReference type="InterPro" id="IPR001077">
    <property type="entry name" value="O_MeTrfase_dom"/>
</dbReference>
<dbReference type="InterPro" id="IPR012967">
    <property type="entry name" value="Plant_O-MeTrfase_dimerisation"/>
</dbReference>
<dbReference type="InterPro" id="IPR029063">
    <property type="entry name" value="SAM-dependent_MTases_sf"/>
</dbReference>
<dbReference type="InterPro" id="IPR036388">
    <property type="entry name" value="WH-like_DNA-bd_sf"/>
</dbReference>
<dbReference type="InterPro" id="IPR036390">
    <property type="entry name" value="WH_DNA-bd_sf"/>
</dbReference>
<dbReference type="NCBIfam" id="TIGR02716">
    <property type="entry name" value="C20_methyl_CrtF"/>
    <property type="match status" value="1"/>
</dbReference>
<dbReference type="PANTHER" id="PTHR11746">
    <property type="entry name" value="O-METHYLTRANSFERASE"/>
    <property type="match status" value="1"/>
</dbReference>
<dbReference type="Pfam" id="PF08100">
    <property type="entry name" value="Dimerisation"/>
    <property type="match status" value="1"/>
</dbReference>
<dbReference type="Pfam" id="PF00891">
    <property type="entry name" value="Methyltransf_2"/>
    <property type="match status" value="1"/>
</dbReference>
<dbReference type="SUPFAM" id="SSF53335">
    <property type="entry name" value="S-adenosyl-L-methionine-dependent methyltransferases"/>
    <property type="match status" value="1"/>
</dbReference>
<dbReference type="SUPFAM" id="SSF46785">
    <property type="entry name" value="Winged helix' DNA-binding domain"/>
    <property type="match status" value="1"/>
</dbReference>
<dbReference type="PROSITE" id="PS51683">
    <property type="entry name" value="SAM_OMT_II"/>
    <property type="match status" value="1"/>
</dbReference>
<protein>
    <recommendedName>
        <fullName evidence="4">Bacteriochlorophyllide d C-20 methyltransferase</fullName>
        <ecNumber evidence="6 7">2.1.1.333</ecNumber>
    </recommendedName>
    <alternativeName>
        <fullName evidence="5">Bacteriochlorophyllide d MTase</fullName>
    </alternativeName>
</protein>
<sequence>MSNNDLLNYYHRANELVFKGLIEFSCMKAAIELDLFSHMAEGPKDLATLAADTGSVPPRLEMLLETLRQMRVINLEDGKWSLTEFADYMFSPTPKEPNLHQTPVAKAMAFLADDFYMGLSQAVRGQKNFKGQVPYPPVTREDNLYFEEIHRSNAKFAIQLLLEEAKLDGVKKMIDVGGGIGDISAAMLKHFPELDSTILNLPGAIDLVNENAAEKGVADRMRGIAVDIYKESYPEADAVLFCRILYSANEQLSTIMCKKAFDAMRSGGRLLILDMVIDDPENPNFDYLSHYILGAGMPFSVLGFKEQARYKEILESLGYKDVTMVRKYDHLLVQAVKP</sequence>
<feature type="chain" id="PRO_0000444474" description="Bacteriochlorophyllide d C-20 methyltransferase">
    <location>
        <begin position="1"/>
        <end position="338"/>
    </location>
</feature>
<feature type="active site" description="Nucleophile" evidence="7">
    <location>
        <position position="246"/>
    </location>
</feature>
<feature type="binding site" evidence="3 10 11 12 13">
    <location>
        <position position="147"/>
    </location>
    <ligand>
        <name>S-adenosyl-L-methionine</name>
        <dbReference type="ChEBI" id="CHEBI:59789"/>
    </ligand>
</feature>
<feature type="binding site" evidence="7">
    <location>
        <position position="150"/>
    </location>
    <ligand>
        <name>substrate</name>
    </ligand>
</feature>
<feature type="binding site" evidence="3 10 11 12 13">
    <location>
        <position position="177"/>
    </location>
    <ligand>
        <name>S-adenosyl-L-methionine</name>
        <dbReference type="ChEBI" id="CHEBI:59789"/>
    </ligand>
</feature>
<feature type="binding site" evidence="3 10 11 12 13">
    <location>
        <position position="200"/>
    </location>
    <ligand>
        <name>S-adenosyl-L-methionine</name>
        <dbReference type="ChEBI" id="CHEBI:59789"/>
    </ligand>
</feature>
<feature type="binding site" evidence="3 10 11 12 13">
    <location>
        <begin position="227"/>
        <end position="228"/>
    </location>
    <ligand>
        <name>S-adenosyl-L-methionine</name>
        <dbReference type="ChEBI" id="CHEBI:59789"/>
    </ligand>
</feature>
<feature type="binding site" evidence="3 10 11 12 13">
    <location>
        <begin position="242"/>
        <end position="243"/>
    </location>
    <ligand>
        <name>S-adenosyl-L-methionine</name>
        <dbReference type="ChEBI" id="CHEBI:59789"/>
    </ligand>
</feature>
<feature type="binding site" description="axial binding residue" evidence="7">
    <location>
        <position position="290"/>
    </location>
    <ligand>
        <name>a bacteriochlorophyll d</name>
        <dbReference type="ChEBI" id="CHEBI:81553"/>
    </ligand>
    <ligandPart>
        <name>Mg</name>
        <dbReference type="ChEBI" id="CHEBI:25107"/>
    </ligandPart>
</feature>
<feature type="mutagenesis site" description="Loss of methyltransferase activity." evidence="3">
    <original>H</original>
    <variation>A</variation>
    <location>
        <position position="150"/>
    </location>
</feature>
<feature type="mutagenesis site" description="Loss of methyltransferase activity." evidence="3">
    <original>Y</original>
    <variation>F</variation>
    <location>
        <position position="246"/>
    </location>
</feature>
<feature type="mutagenesis site" description="Loss of methyltransferase activity." evidence="3">
    <original>H</original>
    <variation>A</variation>
    <location>
        <position position="290"/>
    </location>
</feature>
<feature type="helix" evidence="14">
    <location>
        <begin position="5"/>
        <end position="17"/>
    </location>
</feature>
<feature type="helix" evidence="14">
    <location>
        <begin position="19"/>
        <end position="33"/>
    </location>
</feature>
<feature type="helix" evidence="14">
    <location>
        <begin position="35"/>
        <end position="39"/>
    </location>
</feature>
<feature type="helix" evidence="14">
    <location>
        <begin position="46"/>
        <end position="53"/>
    </location>
</feature>
<feature type="helix" evidence="14">
    <location>
        <begin position="57"/>
        <end position="69"/>
    </location>
</feature>
<feature type="strand" evidence="14">
    <location>
        <begin position="72"/>
        <end position="76"/>
    </location>
</feature>
<feature type="strand" evidence="14">
    <location>
        <begin position="79"/>
        <end position="82"/>
    </location>
</feature>
<feature type="helix" evidence="14">
    <location>
        <begin position="84"/>
        <end position="89"/>
    </location>
</feature>
<feature type="strand" evidence="14">
    <location>
        <begin position="90"/>
        <end position="93"/>
    </location>
</feature>
<feature type="helix" evidence="14">
    <location>
        <begin position="102"/>
        <end position="114"/>
    </location>
</feature>
<feature type="helix" evidence="14">
    <location>
        <begin position="116"/>
        <end position="118"/>
    </location>
</feature>
<feature type="helix" evidence="14">
    <location>
        <begin position="119"/>
        <end position="123"/>
    </location>
</feature>
<feature type="helix" evidence="14">
    <location>
        <begin position="140"/>
        <end position="151"/>
    </location>
</feature>
<feature type="helix" evidence="14">
    <location>
        <begin position="155"/>
        <end position="164"/>
    </location>
</feature>
<feature type="strand" evidence="14">
    <location>
        <begin position="172"/>
        <end position="177"/>
    </location>
</feature>
<feature type="helix" evidence="14">
    <location>
        <begin position="182"/>
        <end position="190"/>
    </location>
</feature>
<feature type="strand" evidence="14">
    <location>
        <begin position="195"/>
        <end position="200"/>
    </location>
</feature>
<feature type="helix" evidence="14">
    <location>
        <begin position="202"/>
        <end position="204"/>
    </location>
</feature>
<feature type="helix" evidence="14">
    <location>
        <begin position="205"/>
        <end position="214"/>
    </location>
</feature>
<feature type="turn" evidence="14">
    <location>
        <begin position="218"/>
        <end position="220"/>
    </location>
</feature>
<feature type="strand" evidence="14">
    <location>
        <begin position="221"/>
        <end position="225"/>
    </location>
</feature>
<feature type="turn" evidence="14">
    <location>
        <begin position="228"/>
        <end position="230"/>
    </location>
</feature>
<feature type="strand" evidence="14">
    <location>
        <begin position="237"/>
        <end position="243"/>
    </location>
</feature>
<feature type="helix" evidence="14">
    <location>
        <begin position="245"/>
        <end position="247"/>
    </location>
</feature>
<feature type="helix" evidence="14">
    <location>
        <begin position="250"/>
        <end position="261"/>
    </location>
</feature>
<feature type="turn" evidence="16">
    <location>
        <begin position="263"/>
        <end position="267"/>
    </location>
</feature>
<feature type="strand" evidence="14">
    <location>
        <begin position="269"/>
        <end position="275"/>
    </location>
</feature>
<feature type="helix" evidence="14">
    <location>
        <begin position="285"/>
        <end position="291"/>
    </location>
</feature>
<feature type="helix" evidence="14">
    <location>
        <begin position="292"/>
        <end position="296"/>
    </location>
</feature>
<feature type="strand" evidence="15">
    <location>
        <begin position="297"/>
        <end position="299"/>
    </location>
</feature>
<feature type="helix" evidence="14">
    <location>
        <begin position="307"/>
        <end position="309"/>
    </location>
</feature>
<feature type="helix" evidence="14">
    <location>
        <begin position="310"/>
        <end position="317"/>
    </location>
</feature>
<feature type="strand" evidence="14">
    <location>
        <begin position="320"/>
        <end position="327"/>
    </location>
</feature>
<feature type="strand" evidence="14">
    <location>
        <begin position="330"/>
        <end position="336"/>
    </location>
</feature>
<comment type="function">
    <text evidence="2 3">Involved in the biosynthesis of the major light-harvesting pigment bacteriochlorophyll c (BChlc), which confers a significant competitive advantage to green sulfur bacteria living at limiting red and near-infrared light intensities (PubMed:15090495). Catalyzes the methylation at the C-20 position of the cyclic tetrapyrrole chlorin of bacteriochlorophyll d (BChld) to produce bacteriochlorophyll c (BChlc) using S-adenosylmethionine (SAM) as a methyl source (PubMed:15090495, PubMed:16797589).</text>
</comment>
<comment type="catalytic activity">
    <reaction evidence="6 7">
        <text>a bacteriochlorophyllide d + S-adenosyl-L-methionine = a bacteriochlorophyllide c + S-adenosyl-L-homocysteine + H(+)</text>
        <dbReference type="Rhea" id="RHEA:49180"/>
        <dbReference type="ChEBI" id="CHEBI:15378"/>
        <dbReference type="ChEBI" id="CHEBI:57856"/>
        <dbReference type="ChEBI" id="CHEBI:59789"/>
        <dbReference type="ChEBI" id="CHEBI:90955"/>
        <dbReference type="ChEBI" id="CHEBI:90965"/>
        <dbReference type="EC" id="2.1.1.333"/>
    </reaction>
</comment>
<comment type="pathway">
    <text evidence="6">Porphyrin-containing compound metabolism; bacteriochlorophyll biosynthesis (light-independent).</text>
</comment>
<comment type="subunit">
    <text evidence="3">Homodimer.</text>
</comment>
<comment type="disruption phenotype">
    <text evidence="2">Cells lacking this gene produce only bacteriochlorophyll d (BChld).</text>
</comment>
<comment type="similarity">
    <text evidence="1">Belongs to the class I-like SAM-binding methyltransferase superfamily. Cation-independent O-methyltransferase family.</text>
</comment>
<proteinExistence type="evidence at protein level"/>
<evidence type="ECO:0000255" key="1">
    <source>
        <dbReference type="PROSITE-ProRule" id="PRU01020"/>
    </source>
</evidence>
<evidence type="ECO:0000269" key="2">
    <source>
    </source>
</evidence>
<evidence type="ECO:0000269" key="3">
    <source>
    </source>
</evidence>
<evidence type="ECO:0000303" key="4">
    <source>
    </source>
</evidence>
<evidence type="ECO:0000303" key="5">
    <source>
    </source>
</evidence>
<evidence type="ECO:0000305" key="6">
    <source>
    </source>
</evidence>
<evidence type="ECO:0000305" key="7">
    <source>
    </source>
</evidence>
<evidence type="ECO:0000312" key="8">
    <source>
        <dbReference type="EMBL" id="AAM71276.1"/>
    </source>
</evidence>
<evidence type="ECO:0000312" key="9">
    <source>
        <dbReference type="Proteomes" id="UP000001007"/>
    </source>
</evidence>
<evidence type="ECO:0007744" key="10">
    <source>
        <dbReference type="PDB" id="1X1A"/>
    </source>
</evidence>
<evidence type="ECO:0007744" key="11">
    <source>
        <dbReference type="PDB" id="1X1B"/>
    </source>
</evidence>
<evidence type="ECO:0007744" key="12">
    <source>
        <dbReference type="PDB" id="1X1C"/>
    </source>
</evidence>
<evidence type="ECO:0007744" key="13">
    <source>
        <dbReference type="PDB" id="1X1D"/>
    </source>
</evidence>
<evidence type="ECO:0007829" key="14">
    <source>
        <dbReference type="PDB" id="1X19"/>
    </source>
</evidence>
<evidence type="ECO:0007829" key="15">
    <source>
        <dbReference type="PDB" id="1X1B"/>
    </source>
</evidence>
<evidence type="ECO:0007829" key="16">
    <source>
        <dbReference type="PDB" id="1X1D"/>
    </source>
</evidence>
<keyword id="KW-0002">3D-structure</keyword>
<keyword id="KW-0077">Bacteriochlorophyll biosynthesis</keyword>
<keyword id="KW-0149">Chlorophyll biosynthesis</keyword>
<keyword id="KW-0460">Magnesium</keyword>
<keyword id="KW-0479">Metal-binding</keyword>
<keyword id="KW-0489">Methyltransferase</keyword>
<keyword id="KW-1185">Reference proteome</keyword>
<keyword id="KW-0949">S-adenosyl-L-methionine</keyword>
<keyword id="KW-0808">Transferase</keyword>
<keyword id="KW-0862">Zinc</keyword>
<name>BCHU_CHLTE</name>
<gene>
    <name evidence="4" type="primary">bchU</name>
    <name evidence="8" type="ordered locus">CT0028</name>
</gene>